<protein>
    <recommendedName>
        <fullName>Nck-associated protein 1 homolog</fullName>
    </recommendedName>
</protein>
<comment type="function">
    <text>Involved in regulation of actin and microtubule organization. Involved in cell adhesion.</text>
</comment>
<comment type="subunit">
    <text evidence="1">Part of a Scar/WAVE complex containing brk1, scrA, abiA, pirA and napA.</text>
</comment>
<comment type="disruption phenotype">
    <text evidence="1">Cells have defects in motility, and various developmental defects, notably in aggregation and adhesion.</text>
</comment>
<comment type="similarity">
    <text evidence="2">Belongs to the HEM-1/HEM-2 family.</text>
</comment>
<keyword id="KW-0130">Cell adhesion</keyword>
<keyword id="KW-1185">Reference proteome</keyword>
<gene>
    <name type="primary">napA</name>
    <name type="synonym">nap1</name>
    <name type="ORF">DDB_G0274519</name>
</gene>
<reference key="1">
    <citation type="journal article" date="2002" name="Nature">
        <title>Sequence and analysis of chromosome 2 of Dictyostelium discoideum.</title>
        <authorList>
            <person name="Gloeckner G."/>
            <person name="Eichinger L."/>
            <person name="Szafranski K."/>
            <person name="Pachebat J.A."/>
            <person name="Bankier A.T."/>
            <person name="Dear P.H."/>
            <person name="Lehmann R."/>
            <person name="Baumgart C."/>
            <person name="Parra G."/>
            <person name="Abril J.F."/>
            <person name="Guigo R."/>
            <person name="Kumpf K."/>
            <person name="Tunggal B."/>
            <person name="Cox E.C."/>
            <person name="Quail M.A."/>
            <person name="Platzer M."/>
            <person name="Rosenthal A."/>
            <person name="Noegel A.A."/>
        </authorList>
    </citation>
    <scope>NUCLEOTIDE SEQUENCE [LARGE SCALE GENOMIC DNA]</scope>
    <source>
        <strain>AX4</strain>
    </source>
</reference>
<reference key="2">
    <citation type="journal article" date="2005" name="Nature">
        <title>The genome of the social amoeba Dictyostelium discoideum.</title>
        <authorList>
            <person name="Eichinger L."/>
            <person name="Pachebat J.A."/>
            <person name="Gloeckner G."/>
            <person name="Rajandream M.A."/>
            <person name="Sucgang R."/>
            <person name="Berriman M."/>
            <person name="Song J."/>
            <person name="Olsen R."/>
            <person name="Szafranski K."/>
            <person name="Xu Q."/>
            <person name="Tunggal B."/>
            <person name="Kummerfeld S."/>
            <person name="Madera M."/>
            <person name="Konfortov B.A."/>
            <person name="Rivero F."/>
            <person name="Bankier A.T."/>
            <person name="Lehmann R."/>
            <person name="Hamlin N."/>
            <person name="Davies R."/>
            <person name="Gaudet P."/>
            <person name="Fey P."/>
            <person name="Pilcher K."/>
            <person name="Chen G."/>
            <person name="Saunders D."/>
            <person name="Sodergren E.J."/>
            <person name="Davis P."/>
            <person name="Kerhornou A."/>
            <person name="Nie X."/>
            <person name="Hall N."/>
            <person name="Anjard C."/>
            <person name="Hemphill L."/>
            <person name="Bason N."/>
            <person name="Farbrother P."/>
            <person name="Desany B."/>
            <person name="Just E."/>
            <person name="Morio T."/>
            <person name="Rost R."/>
            <person name="Churcher C.M."/>
            <person name="Cooper J."/>
            <person name="Haydock S."/>
            <person name="van Driessche N."/>
            <person name="Cronin A."/>
            <person name="Goodhead I."/>
            <person name="Muzny D.M."/>
            <person name="Mourier T."/>
            <person name="Pain A."/>
            <person name="Lu M."/>
            <person name="Harper D."/>
            <person name="Lindsay R."/>
            <person name="Hauser H."/>
            <person name="James K.D."/>
            <person name="Quiles M."/>
            <person name="Madan Babu M."/>
            <person name="Saito T."/>
            <person name="Buchrieser C."/>
            <person name="Wardroper A."/>
            <person name="Felder M."/>
            <person name="Thangavelu M."/>
            <person name="Johnson D."/>
            <person name="Knights A."/>
            <person name="Loulseged H."/>
            <person name="Mungall K.L."/>
            <person name="Oliver K."/>
            <person name="Price C."/>
            <person name="Quail M.A."/>
            <person name="Urushihara H."/>
            <person name="Hernandez J."/>
            <person name="Rabbinowitsch E."/>
            <person name="Steffen D."/>
            <person name="Sanders M."/>
            <person name="Ma J."/>
            <person name="Kohara Y."/>
            <person name="Sharp S."/>
            <person name="Simmonds M.N."/>
            <person name="Spiegler S."/>
            <person name="Tivey A."/>
            <person name="Sugano S."/>
            <person name="White B."/>
            <person name="Walker D."/>
            <person name="Woodward J.R."/>
            <person name="Winckler T."/>
            <person name="Tanaka Y."/>
            <person name="Shaulsky G."/>
            <person name="Schleicher M."/>
            <person name="Weinstock G.M."/>
            <person name="Rosenthal A."/>
            <person name="Cox E.C."/>
            <person name="Chisholm R.L."/>
            <person name="Gibbs R.A."/>
            <person name="Loomis W.F."/>
            <person name="Platzer M."/>
            <person name="Kay R.R."/>
            <person name="Williams J.G."/>
            <person name="Dear P.H."/>
            <person name="Noegel A.A."/>
            <person name="Barrell B.G."/>
            <person name="Kuspa A."/>
        </authorList>
    </citation>
    <scope>NUCLEOTIDE SEQUENCE [LARGE SCALE GENOMIC DNA]</scope>
    <source>
        <strain>AX4</strain>
    </source>
</reference>
<reference key="3">
    <citation type="journal article" date="2006" name="Curr. Biol.">
        <title>Nap1 regulates Dictyostelium cell motility and adhesion through SCAR-dependent and -independent pathways.</title>
        <authorList>
            <person name="Ibarra N."/>
            <person name="Blagg S.L."/>
            <person name="Vazquez F."/>
            <person name="Insall R.H."/>
        </authorList>
    </citation>
    <scope>IDENTIFICATION IN THE WAVE COMPLEX</scope>
    <scope>DISRUPTION PHENOTYPE</scope>
</reference>
<feature type="chain" id="PRO_0000331389" description="Nck-associated protein 1 homolog">
    <location>
        <begin position="1"/>
        <end position="1160"/>
    </location>
</feature>
<evidence type="ECO:0000269" key="1">
    <source>
    </source>
</evidence>
<evidence type="ECO:0000305" key="2"/>
<accession>Q869Q3</accession>
<accession>Q555I6</accession>
<name>NAPA_DICDI</name>
<sequence length="1160" mass="133540">MAHTNLPEKFQVVIENGENILQRVYNTYKLFQNNKVKPSFFNDEKISKILKNLIAKYPELPENNDKSITGFDLLTSRAKQHLEELEDHYYTITDAYDWKEASFILMQEISSNTVSINFNNNIQLCSKFLDVLVLYGKINYLVSLIPDKKIITAVYAKLFLYTRSASEPTFSKMGRWINDIEQPFKKIQEEFRVLNDAVGHALSSFELTYAKRRVITQLRKDGALNLILKPEDIARPVQDSYRIELAYAGRIQQWILFGYLFAPGTLSTPQSIELLRFTLSECFYLSVFKDISISIHNEFNTLFKNYKSKTINLQKQKKIIKDAAQASTQEAPRKHAERRVYIRQELEAMWNLFRDKPCLLAPKINVLLAALSMAKEEIFWYFRHTDVIPPEKVKKFYNKQNEVREKRISSLLSLVDHLVQLVHTHKKMIQNYYLEYISGADILGLQKVITPQLLQNAGSIVTQAVNTIVNELKSLNANGQDYSFEGFRANWMRLGYLLQSNSCPLKESESKQITSRLNLIYTHSKNVDCLDQLLDEYGNMTQLWSYKEPLFHSFDAAIVDMTCDQPSHSMIYLKLLSQFPNHVANQFYPEEKELIGKECVELANSCLTKITNRIVSIMANTIASTFLSDEQQLADVNAAFPLLQKKKDWKPPKDFVPPIEPASESQFRNRANLEQLRSEEKNAFQLCTALNEFLDITIYDHIFVPREFLREKLGSALKQYMRQSIQPPAPTSSSSQIDINITRLSTYESQLRVFIGVLILVENHVDIDIGDLIRETILTEFYAKALGKSGRVDWFPEGEIEMNELTLHSITSYYVDLVSKKLNTPGVVFSPVKLGFISKAGTPFRAEEHADLTEMRALCDLVGPYGIKVIEREILRFILTTTTSMKEILSLNAANLEEFASNYYKPKAMELLKKFKTTDLDLIVTKSIAIGNALHLRSMIRESMKDVITDNFPYINNAVANAFDQYNRNTFMFPDFLGVDTLALDSGLNVGIADQYLKVILRKVSSEADKRIWELLPVMFSLTFYGNIWKETQYKATIDAHSNNVHVLSKTIIDLLIAFGAINSTTGNEAELFQSFKRFLEISSVNILRMFKGKQGEKFVPNEIQSVIIFLDKFTQQCPLLSKDSLEQYIPYSLIRNMYKDLYEHKNLQKQQSETSEQNF</sequence>
<dbReference type="EMBL" id="AAFI02000012">
    <property type="protein sequence ID" value="EAL70152.1"/>
    <property type="molecule type" value="Genomic_DNA"/>
</dbReference>
<dbReference type="RefSeq" id="XP_644083.1">
    <property type="nucleotide sequence ID" value="XM_638991.1"/>
</dbReference>
<dbReference type="SMR" id="Q869Q3"/>
<dbReference type="FunCoup" id="Q869Q3">
    <property type="interactions" value="260"/>
</dbReference>
<dbReference type="STRING" id="44689.Q869Q3"/>
<dbReference type="GlyGen" id="Q869Q3">
    <property type="glycosylation" value="1 site"/>
</dbReference>
<dbReference type="PaxDb" id="44689-DDB0231423"/>
<dbReference type="EnsemblProtists" id="EAL70152">
    <property type="protein sequence ID" value="EAL70152"/>
    <property type="gene ID" value="DDB_G0274519"/>
</dbReference>
<dbReference type="GeneID" id="8619512"/>
<dbReference type="KEGG" id="ddi:DDB_G0274519"/>
<dbReference type="dictyBase" id="DDB_G0274519">
    <property type="gene designation" value="napA"/>
</dbReference>
<dbReference type="VEuPathDB" id="AmoebaDB:DDB_G0274519"/>
<dbReference type="eggNOG" id="KOG1917">
    <property type="taxonomic scope" value="Eukaryota"/>
</dbReference>
<dbReference type="HOGENOM" id="CLU_004450_1_0_1"/>
<dbReference type="InParanoid" id="Q869Q3"/>
<dbReference type="OMA" id="INVWEYT"/>
<dbReference type="PhylomeDB" id="Q869Q3"/>
<dbReference type="Reactome" id="R-DDI-2029482">
    <property type="pathway name" value="Regulation of actin dynamics for phagocytic cup formation"/>
</dbReference>
<dbReference type="Reactome" id="R-DDI-5663213">
    <property type="pathway name" value="RHO GTPases Activate WASPs and WAVEs"/>
</dbReference>
<dbReference type="Reactome" id="R-DDI-6798695">
    <property type="pathway name" value="Neutrophil degranulation"/>
</dbReference>
<dbReference type="Reactome" id="R-DDI-9013149">
    <property type="pathway name" value="RAC1 GTPase cycle"/>
</dbReference>
<dbReference type="Reactome" id="R-DDI-9013404">
    <property type="pathway name" value="RAC2 GTPase cycle"/>
</dbReference>
<dbReference type="Reactome" id="R-DDI-9013423">
    <property type="pathway name" value="RAC3 GTPase cycle"/>
</dbReference>
<dbReference type="PRO" id="PR:Q869Q3"/>
<dbReference type="Proteomes" id="UP000002195">
    <property type="component" value="Chromosome 2"/>
</dbReference>
<dbReference type="GO" id="GO:0031252">
    <property type="term" value="C:cell leading edge"/>
    <property type="evidence" value="ECO:0000305"/>
    <property type="project" value="dictyBase"/>
</dbReference>
<dbReference type="GO" id="GO:0005911">
    <property type="term" value="C:cell-cell junction"/>
    <property type="evidence" value="ECO:0000305"/>
    <property type="project" value="dictyBase"/>
</dbReference>
<dbReference type="GO" id="GO:0032433">
    <property type="term" value="C:filopodium tip"/>
    <property type="evidence" value="ECO:0000305"/>
    <property type="project" value="dictyBase"/>
</dbReference>
<dbReference type="GO" id="GO:0031143">
    <property type="term" value="C:pseudopodium"/>
    <property type="evidence" value="ECO:0000305"/>
    <property type="project" value="dictyBase"/>
</dbReference>
<dbReference type="GO" id="GO:0031209">
    <property type="term" value="C:SCAR complex"/>
    <property type="evidence" value="ECO:0000314"/>
    <property type="project" value="dictyBase"/>
</dbReference>
<dbReference type="GO" id="GO:0016477">
    <property type="term" value="P:cell migration"/>
    <property type="evidence" value="ECO:0000318"/>
    <property type="project" value="GO_Central"/>
</dbReference>
<dbReference type="GO" id="GO:0000902">
    <property type="term" value="P:cell morphogenesis"/>
    <property type="evidence" value="ECO:0000318"/>
    <property type="project" value="GO_Central"/>
</dbReference>
<dbReference type="GO" id="GO:0048870">
    <property type="term" value="P:cell motility"/>
    <property type="evidence" value="ECO:0000315"/>
    <property type="project" value="dictyBase"/>
</dbReference>
<dbReference type="GO" id="GO:0030031">
    <property type="term" value="P:cell projection assembly"/>
    <property type="evidence" value="ECO:0000318"/>
    <property type="project" value="GO_Central"/>
</dbReference>
<dbReference type="GO" id="GO:0098609">
    <property type="term" value="P:cell-cell adhesion"/>
    <property type="evidence" value="ECO:0000315"/>
    <property type="project" value="dictyBase"/>
</dbReference>
<dbReference type="GO" id="GO:0031589">
    <property type="term" value="P:cell-substrate adhesion"/>
    <property type="evidence" value="ECO:0000315"/>
    <property type="project" value="dictyBase"/>
</dbReference>
<dbReference type="GO" id="GO:0030866">
    <property type="term" value="P:cortical actin cytoskeleton organization"/>
    <property type="evidence" value="ECO:0000318"/>
    <property type="project" value="GO_Central"/>
</dbReference>
<dbReference type="GO" id="GO:0046847">
    <property type="term" value="P:filopodium assembly"/>
    <property type="evidence" value="ECO:0000315"/>
    <property type="project" value="dictyBase"/>
</dbReference>
<dbReference type="GO" id="GO:0006972">
    <property type="term" value="P:hyperosmotic response"/>
    <property type="evidence" value="ECO:0000270"/>
    <property type="project" value="dictyBase"/>
</dbReference>
<dbReference type="GO" id="GO:0000281">
    <property type="term" value="P:mitotic cytokinesis"/>
    <property type="evidence" value="ECO:0000315"/>
    <property type="project" value="dictyBase"/>
</dbReference>
<dbReference type="GO" id="GO:0110094">
    <property type="term" value="P:polyphosphate-mediated signaling"/>
    <property type="evidence" value="ECO:0000315"/>
    <property type="project" value="dictyBase"/>
</dbReference>
<dbReference type="GO" id="GO:0046956">
    <property type="term" value="P:positive phototaxis"/>
    <property type="evidence" value="ECO:0000315"/>
    <property type="project" value="dictyBase"/>
</dbReference>
<dbReference type="GO" id="GO:0030838">
    <property type="term" value="P:positive regulation of actin filament polymerization"/>
    <property type="evidence" value="ECO:0000315"/>
    <property type="project" value="dictyBase"/>
</dbReference>
<dbReference type="GO" id="GO:0008064">
    <property type="term" value="P:regulation of actin polymerization or depolymerization"/>
    <property type="evidence" value="ECO:0000304"/>
    <property type="project" value="dictyBase"/>
</dbReference>
<dbReference type="GO" id="GO:0097178">
    <property type="term" value="P:ruffle assembly"/>
    <property type="evidence" value="ECO:0000315"/>
    <property type="project" value="dictyBase"/>
</dbReference>
<dbReference type="InterPro" id="IPR019137">
    <property type="entry name" value="Nck-associated_protein-1"/>
</dbReference>
<dbReference type="PANTHER" id="PTHR12093:SF10">
    <property type="entry name" value="MEMBRANE-ASSOCIATED PROTEIN HEM"/>
    <property type="match status" value="1"/>
</dbReference>
<dbReference type="PANTHER" id="PTHR12093">
    <property type="entry name" value="NCK-ASSOCIATED PROTEIN 1"/>
    <property type="match status" value="1"/>
</dbReference>
<dbReference type="Pfam" id="PF09735">
    <property type="entry name" value="Nckap1"/>
    <property type="match status" value="1"/>
</dbReference>
<proteinExistence type="evidence at protein level"/>
<organism>
    <name type="scientific">Dictyostelium discoideum</name>
    <name type="common">Social amoeba</name>
    <dbReference type="NCBI Taxonomy" id="44689"/>
    <lineage>
        <taxon>Eukaryota</taxon>
        <taxon>Amoebozoa</taxon>
        <taxon>Evosea</taxon>
        <taxon>Eumycetozoa</taxon>
        <taxon>Dictyostelia</taxon>
        <taxon>Dictyosteliales</taxon>
        <taxon>Dictyosteliaceae</taxon>
        <taxon>Dictyostelium</taxon>
    </lineage>
</organism>